<dbReference type="EMBL" id="CP000733">
    <property type="protein sequence ID" value="ABS76959.1"/>
    <property type="molecule type" value="Genomic_DNA"/>
</dbReference>
<dbReference type="RefSeq" id="WP_005768409.1">
    <property type="nucleotide sequence ID" value="NC_009727.1"/>
</dbReference>
<dbReference type="SMR" id="A9KE66"/>
<dbReference type="KEGG" id="cbd:CBUD_1224"/>
<dbReference type="HOGENOM" id="CLU_144710_3_0_6"/>
<dbReference type="Proteomes" id="UP000008555">
    <property type="component" value="Chromosome"/>
</dbReference>
<dbReference type="Gene3D" id="1.10.1660.10">
    <property type="match status" value="1"/>
</dbReference>
<dbReference type="HAMAP" id="MF_01155">
    <property type="entry name" value="CbpM"/>
    <property type="match status" value="1"/>
</dbReference>
<dbReference type="InterPro" id="IPR022835">
    <property type="entry name" value="CbpM"/>
</dbReference>
<dbReference type="Pfam" id="PF13591">
    <property type="entry name" value="MerR_2"/>
    <property type="match status" value="1"/>
</dbReference>
<protein>
    <recommendedName>
        <fullName evidence="1">Chaperone modulatory protein CbpM</fullName>
    </recommendedName>
</protein>
<organism>
    <name type="scientific">Coxiella burnetii (strain Dugway 5J108-111)</name>
    <dbReference type="NCBI Taxonomy" id="434922"/>
    <lineage>
        <taxon>Bacteria</taxon>
        <taxon>Pseudomonadati</taxon>
        <taxon>Pseudomonadota</taxon>
        <taxon>Gammaproteobacteria</taxon>
        <taxon>Legionellales</taxon>
        <taxon>Coxiellaceae</taxon>
        <taxon>Coxiella</taxon>
    </lineage>
</organism>
<reference key="1">
    <citation type="journal article" date="2009" name="Infect. Immun.">
        <title>Comparative genomics reveal extensive transposon-mediated genomic plasticity and diversity among potential effector proteins within the genus Coxiella.</title>
        <authorList>
            <person name="Beare P.A."/>
            <person name="Unsworth N."/>
            <person name="Andoh M."/>
            <person name="Voth D.E."/>
            <person name="Omsland A."/>
            <person name="Gilk S.D."/>
            <person name="Williams K.P."/>
            <person name="Sobral B.W."/>
            <person name="Kupko J.J. III"/>
            <person name="Porcella S.F."/>
            <person name="Samuel J.E."/>
            <person name="Heinzen R.A."/>
        </authorList>
    </citation>
    <scope>NUCLEOTIDE SEQUENCE [LARGE SCALE GENOMIC DNA]</scope>
    <source>
        <strain>Dugway 5J108-111</strain>
    </source>
</reference>
<evidence type="ECO:0000255" key="1">
    <source>
        <dbReference type="HAMAP-Rule" id="MF_01155"/>
    </source>
</evidence>
<accession>A9KE66</accession>
<proteinExistence type="inferred from homology"/>
<gene>
    <name evidence="1" type="primary">cbpM</name>
    <name type="ordered locus">CBUD_1224</name>
</gene>
<name>CBPM_COXBN</name>
<comment type="function">
    <text evidence="1">Interacts with CbpA and inhibits both the DnaJ-like co-chaperone activity and the DNA binding activity of CbpA. Together with CbpA, modulates the activity of the DnaK chaperone system. Does not inhibit the co-chaperone activity of DnaJ.</text>
</comment>
<comment type="similarity">
    <text evidence="1">Belongs to the CbpM family.</text>
</comment>
<sequence length="106" mass="12380">MTKQIIKGIIIERSSPLKIDELSQAVHLRREIIIEMVEHRLIEPEGSSPTSWKFDNVCLKRAKIAASFYRDLEINMPGIAIALDLLDKIEHLEQRLRTLERFENQE</sequence>
<feature type="chain" id="PRO_1000085343" description="Chaperone modulatory protein CbpM">
    <location>
        <begin position="1"/>
        <end position="106"/>
    </location>
</feature>